<keyword id="KW-0002">3D-structure</keyword>
<keyword id="KW-0106">Calcium</keyword>
<keyword id="KW-0109">Calcium transport</keyword>
<keyword id="KW-0406">Ion transport</keyword>
<keyword id="KW-0472">Membrane</keyword>
<keyword id="KW-0496">Mitochondrion</keyword>
<keyword id="KW-0999">Mitochondrion inner membrane</keyword>
<keyword id="KW-1185">Reference proteome</keyword>
<keyword id="KW-0809">Transit peptide</keyword>
<keyword id="KW-0812">Transmembrane</keyword>
<keyword id="KW-1133">Transmembrane helix</keyword>
<keyword id="KW-0813">Transport</keyword>
<evidence type="ECO:0000250" key="1">
    <source>
        <dbReference type="UniProtKB" id="Q9H4I9"/>
    </source>
</evidence>
<evidence type="ECO:0000269" key="2">
    <source>
    </source>
</evidence>
<evidence type="ECO:0000269" key="3">
    <source>
    </source>
</evidence>
<evidence type="ECO:0000303" key="4">
    <source>
    </source>
</evidence>
<evidence type="ECO:0000303" key="5">
    <source>
    </source>
</evidence>
<evidence type="ECO:0000305" key="6"/>
<evidence type="ECO:0000305" key="7">
    <source>
    </source>
</evidence>
<evidence type="ECO:0000305" key="8">
    <source>
    </source>
</evidence>
<evidence type="ECO:0000312" key="9">
    <source>
        <dbReference type="EMBL" id="EFA09907.1"/>
    </source>
</evidence>
<evidence type="ECO:0007744" key="10">
    <source>
        <dbReference type="PDB" id="6X4S"/>
    </source>
</evidence>
<evidence type="ECO:0007744" key="11">
    <source>
        <dbReference type="PDB" id="6XQN"/>
    </source>
</evidence>
<evidence type="ECO:0007829" key="12">
    <source>
        <dbReference type="PDB" id="6XQN"/>
    </source>
</evidence>
<reference key="1">
    <citation type="journal article" date="2008" name="Nature">
        <title>The genome of the model beetle and pest Tribolium castaneum.</title>
        <authorList>
            <consortium name="Tribolium Genome Sequencing Consortium"/>
            <person name="Richards S."/>
            <person name="Gibbs R.A."/>
            <person name="Weinstock G.M."/>
            <person name="Brown S.J."/>
            <person name="Denell R."/>
            <person name="Beeman R.W."/>
            <person name="Gibbs R."/>
            <person name="Beeman R.W."/>
            <person name="Brown S.J."/>
            <person name="Bucher G."/>
            <person name="Friedrich M."/>
            <person name="Grimmelikhuijzen C.J."/>
            <person name="Klingler M."/>
            <person name="Lorenzen M."/>
            <person name="Richards S."/>
            <person name="Roth S."/>
            <person name="Schroder R."/>
            <person name="Tautz D."/>
            <person name="Zdobnov E.M."/>
            <person name="Muzny D."/>
            <person name="Gibbs R.A."/>
            <person name="Weinstock G.M."/>
            <person name="Attaway T."/>
            <person name="Bell S."/>
            <person name="Buhay C.J."/>
            <person name="Chandrabose M.N."/>
            <person name="Chavez D."/>
            <person name="Clerk-Blankenburg K.P."/>
            <person name="Cree A."/>
            <person name="Dao M."/>
            <person name="Davis C."/>
            <person name="Chacko J."/>
            <person name="Dinh H."/>
            <person name="Dugan-Rocha S."/>
            <person name="Fowler G."/>
            <person name="Garner T.T."/>
            <person name="Garnes J."/>
            <person name="Gnirke A."/>
            <person name="Hawes A."/>
            <person name="Hernandez J."/>
            <person name="Hines S."/>
            <person name="Holder M."/>
            <person name="Hume J."/>
            <person name="Jhangiani S.N."/>
            <person name="Joshi V."/>
            <person name="Khan Z.M."/>
            <person name="Jackson L."/>
            <person name="Kovar C."/>
            <person name="Kowis A."/>
            <person name="Lee S."/>
            <person name="Lewis L.R."/>
            <person name="Margolis J."/>
            <person name="Morgan M."/>
            <person name="Nazareth L.V."/>
            <person name="Nguyen N."/>
            <person name="Okwuonu G."/>
            <person name="Parker D."/>
            <person name="Richards S."/>
            <person name="Ruiz S.J."/>
            <person name="Santibanez J."/>
            <person name="Savard J."/>
            <person name="Scherer S.E."/>
            <person name="Schneider B."/>
            <person name="Sodergren E."/>
            <person name="Tautz D."/>
            <person name="Vattahil S."/>
            <person name="Villasana D."/>
            <person name="White C.S."/>
            <person name="Wright R."/>
            <person name="Park Y."/>
            <person name="Beeman R.W."/>
            <person name="Lord J."/>
            <person name="Oppert B."/>
            <person name="Lorenzen M."/>
            <person name="Brown S."/>
            <person name="Wang L."/>
            <person name="Savard J."/>
            <person name="Tautz D."/>
            <person name="Richards S."/>
            <person name="Weinstock G."/>
            <person name="Gibbs R.A."/>
            <person name="Liu Y."/>
            <person name="Worley K."/>
            <person name="Weinstock G."/>
            <person name="Elsik C.G."/>
            <person name="Reese J.T."/>
            <person name="Elhaik E."/>
            <person name="Landan G."/>
            <person name="Graur D."/>
            <person name="Arensburger P."/>
            <person name="Atkinson P."/>
            <person name="Beeman R.W."/>
            <person name="Beidler J."/>
            <person name="Brown S.J."/>
            <person name="Demuth J.P."/>
            <person name="Drury D.W."/>
            <person name="Du Y.Z."/>
            <person name="Fujiwara H."/>
            <person name="Lorenzen M."/>
            <person name="Maselli V."/>
            <person name="Osanai M."/>
            <person name="Park Y."/>
            <person name="Robertson H.M."/>
            <person name="Tu Z."/>
            <person name="Wang J.J."/>
            <person name="Wang S."/>
            <person name="Richards S."/>
            <person name="Song H."/>
            <person name="Zhang L."/>
            <person name="Sodergren E."/>
            <person name="Werner D."/>
            <person name="Stanke M."/>
            <person name="Morgenstern B."/>
            <person name="Solovyev V."/>
            <person name="Kosarev P."/>
            <person name="Brown G."/>
            <person name="Chen H.C."/>
            <person name="Ermolaeva O."/>
            <person name="Hlavina W."/>
            <person name="Kapustin Y."/>
            <person name="Kiryutin B."/>
            <person name="Kitts P."/>
            <person name="Maglott D."/>
            <person name="Pruitt K."/>
            <person name="Sapojnikov V."/>
            <person name="Souvorov A."/>
            <person name="Mackey A.J."/>
            <person name="Waterhouse R.M."/>
            <person name="Wyder S."/>
            <person name="Zdobnov E.M."/>
            <person name="Zdobnov E.M."/>
            <person name="Wyder S."/>
            <person name="Kriventseva E.V."/>
            <person name="Kadowaki T."/>
            <person name="Bork P."/>
            <person name="Aranda M."/>
            <person name="Bao R."/>
            <person name="Beermann A."/>
            <person name="Berns N."/>
            <person name="Bolognesi R."/>
            <person name="Bonneton F."/>
            <person name="Bopp D."/>
            <person name="Brown S.J."/>
            <person name="Bucher G."/>
            <person name="Butts T."/>
            <person name="Chaumot A."/>
            <person name="Denell R.E."/>
            <person name="Ferrier D.E."/>
            <person name="Friedrich M."/>
            <person name="Gordon C.M."/>
            <person name="Jindra M."/>
            <person name="Klingler M."/>
            <person name="Lan Q."/>
            <person name="Lattorff H.M."/>
            <person name="Laudet V."/>
            <person name="von Levetsow C."/>
            <person name="Liu Z."/>
            <person name="Lutz R."/>
            <person name="Lynch J.A."/>
            <person name="da Fonseca R.N."/>
            <person name="Posnien N."/>
            <person name="Reuter R."/>
            <person name="Roth S."/>
            <person name="Savard J."/>
            <person name="Schinko J.B."/>
            <person name="Schmitt C."/>
            <person name="Schoppmeier M."/>
            <person name="Schroder R."/>
            <person name="Shippy T.D."/>
            <person name="Simonnet F."/>
            <person name="Marques-Souza H."/>
            <person name="Tautz D."/>
            <person name="Tomoyasu Y."/>
            <person name="Trauner J."/>
            <person name="Van der Zee M."/>
            <person name="Vervoort M."/>
            <person name="Wittkopp N."/>
            <person name="Wimmer E.A."/>
            <person name="Yang X."/>
            <person name="Jones A.K."/>
            <person name="Sattelle D.B."/>
            <person name="Ebert P.R."/>
            <person name="Nelson D."/>
            <person name="Scott J.G."/>
            <person name="Beeman R.W."/>
            <person name="Muthukrishnan S."/>
            <person name="Kramer K.J."/>
            <person name="Arakane Y."/>
            <person name="Beeman R.W."/>
            <person name="Zhu Q."/>
            <person name="Hogenkamp D."/>
            <person name="Dixit R."/>
            <person name="Oppert B."/>
            <person name="Jiang H."/>
            <person name="Zou Z."/>
            <person name="Marshall J."/>
            <person name="Elpidina E."/>
            <person name="Vinokurov K."/>
            <person name="Oppert C."/>
            <person name="Zou Z."/>
            <person name="Evans J."/>
            <person name="Lu Z."/>
            <person name="Zhao P."/>
            <person name="Sumathipala N."/>
            <person name="Altincicek B."/>
            <person name="Vilcinskas A."/>
            <person name="Williams M."/>
            <person name="Hultmark D."/>
            <person name="Hetru C."/>
            <person name="Jiang H."/>
            <person name="Grimmelikhuijzen C.J."/>
            <person name="Hauser F."/>
            <person name="Cazzamali G."/>
            <person name="Williamson M."/>
            <person name="Park Y."/>
            <person name="Li B."/>
            <person name="Tanaka Y."/>
            <person name="Predel R."/>
            <person name="Neupert S."/>
            <person name="Schachtner J."/>
            <person name="Verleyen P."/>
            <person name="Raible F."/>
            <person name="Bork P."/>
            <person name="Friedrich M."/>
            <person name="Walden K.K."/>
            <person name="Robertson H.M."/>
            <person name="Angeli S."/>
            <person name="Foret S."/>
            <person name="Bucher G."/>
            <person name="Schuetz S."/>
            <person name="Maleszka R."/>
            <person name="Wimmer E.A."/>
            <person name="Beeman R.W."/>
            <person name="Lorenzen M."/>
            <person name="Tomoyasu Y."/>
            <person name="Miller S.C."/>
            <person name="Grossmann D."/>
            <person name="Bucher G."/>
        </authorList>
    </citation>
    <scope>NUCLEOTIDE SEQUENCE [LARGE SCALE GENOMIC DNA]</scope>
    <source>
        <strain>Georgia GA2</strain>
    </source>
</reference>
<reference key="2">
    <citation type="journal article" date="2010" name="Nucleic Acids Res.">
        <title>BeetleBase in 2010: revisions to provide comprehensive genomic information for Tribolium castaneum.</title>
        <authorList>
            <person name="Kim H.S."/>
            <person name="Murphy T."/>
            <person name="Xia J."/>
            <person name="Caragea D."/>
            <person name="Park Y."/>
            <person name="Beeman R.W."/>
            <person name="Lorenzen M.D."/>
            <person name="Butcher S."/>
            <person name="Manak J.R."/>
            <person name="Brown S.J."/>
        </authorList>
    </citation>
    <scope>GENOME REANNOTATION</scope>
    <source>
        <strain>Georgia GA2</strain>
    </source>
</reference>
<reference evidence="11" key="3">
    <citation type="journal article" date="2020" name="Elife">
        <title>Structures reveal gatekeeping of the mitochondrial Ca2+ uniporter by MICU1-MICU2.</title>
        <authorList>
            <person name="Wang C."/>
            <person name="Jacewicz A."/>
            <person name="Delgado B.D."/>
            <person name="Baradaran R."/>
            <person name="Long S.B."/>
        </authorList>
    </citation>
    <scope>STRUCTURE BY ELECTRON MICROSCOPY (3.30 ANGSTROMS) OF 29-90 OF THE UNIPLEX COMPLEX</scope>
    <scope>FUNCTION</scope>
    <scope>IDENTIFICATION IN THE UNIPLEX COMPLEX</scope>
</reference>
<reference evidence="10" key="4">
    <citation type="journal article" date="2020" name="J. Mol. Biol.">
        <title>Structure and reconstitution of an MCU-EMRE mitochondrial Ca2+ uniporter complex.</title>
        <authorList>
            <person name="Wang C."/>
            <person name="Baradaran R."/>
            <person name="Long S.B."/>
        </authorList>
    </citation>
    <scope>STRUCTURE BY ELECTRON MICROSCOPY (3.50 ANGSTROMS) OF 35-74 IN COMPLEX WITH MCU</scope>
    <scope>FUNCTION</scope>
    <scope>INTERACTION WITH MCU</scope>
</reference>
<name>EMRE_TRICA</name>
<dbReference type="EMBL" id="KQ971371">
    <property type="protein sequence ID" value="EFA09907.1"/>
    <property type="molecule type" value="Genomic_DNA"/>
</dbReference>
<dbReference type="RefSeq" id="XP_064210690.1">
    <property type="nucleotide sequence ID" value="XM_064354620.1"/>
</dbReference>
<dbReference type="PDB" id="6X4S">
    <property type="method" value="EM"/>
    <property type="resolution" value="3.50 A"/>
    <property type="chains" value="A/B/C/D/E/F/G/H=35-74"/>
</dbReference>
<dbReference type="PDB" id="6XQN">
    <property type="method" value="EM"/>
    <property type="resolution" value="3.30 A"/>
    <property type="chains" value="E/G/H=29-90"/>
</dbReference>
<dbReference type="PDBsum" id="6X4S"/>
<dbReference type="PDBsum" id="6XQN"/>
<dbReference type="EMDB" id="EMD-22042"/>
<dbReference type="EMDB" id="EMD-22290"/>
<dbReference type="SMR" id="D6X268"/>
<dbReference type="FunCoup" id="D6X268">
    <property type="interactions" value="152"/>
</dbReference>
<dbReference type="STRING" id="7070.D6X268"/>
<dbReference type="TCDB" id="8.A.45.1.6">
    <property type="family name" value="the essential mcu regulator emre (emre) family"/>
</dbReference>
<dbReference type="EnsemblMetazoa" id="TC012057_001">
    <property type="protein sequence ID" value="TC012057_001"/>
    <property type="gene ID" value="TC012057"/>
</dbReference>
<dbReference type="GeneID" id="135265298"/>
<dbReference type="eggNOG" id="KOG4542">
    <property type="taxonomic scope" value="Eukaryota"/>
</dbReference>
<dbReference type="HOGENOM" id="CLU_172921_2_1_1"/>
<dbReference type="InParanoid" id="D6X268"/>
<dbReference type="OMA" id="MGTQISK"/>
<dbReference type="PhylomeDB" id="D6X268"/>
<dbReference type="Proteomes" id="UP000007266">
    <property type="component" value="Linkage group 9"/>
</dbReference>
<dbReference type="GO" id="GO:1990246">
    <property type="term" value="C:uniplex complex"/>
    <property type="evidence" value="ECO:0000314"/>
    <property type="project" value="UniProtKB"/>
</dbReference>
<dbReference type="GO" id="GO:0036444">
    <property type="term" value="P:calcium import into the mitochondrion"/>
    <property type="evidence" value="ECO:0000314"/>
    <property type="project" value="UniProtKB"/>
</dbReference>
<dbReference type="GO" id="GO:0051560">
    <property type="term" value="P:mitochondrial calcium ion homeostasis"/>
    <property type="evidence" value="ECO:0000318"/>
    <property type="project" value="GO_Central"/>
</dbReference>
<dbReference type="InterPro" id="IPR018782">
    <property type="entry name" value="MCU_reg"/>
</dbReference>
<dbReference type="PANTHER" id="PTHR33904">
    <property type="entry name" value="ESSENTIAL MCU REGULATOR, MITOCHONDRIAL"/>
    <property type="match status" value="1"/>
</dbReference>
<dbReference type="PANTHER" id="PTHR33904:SF1">
    <property type="entry name" value="ESSENTIAL MCU REGULATOR, MITOCHONDRIAL"/>
    <property type="match status" value="1"/>
</dbReference>
<dbReference type="Pfam" id="PF10161">
    <property type="entry name" value="DDDD"/>
    <property type="match status" value="1"/>
</dbReference>
<protein>
    <recommendedName>
        <fullName evidence="6">Essential MCU regulator, mitochondrial</fullName>
        <shortName evidence="4 5">TcEMRE</shortName>
    </recommendedName>
</protein>
<gene>
    <name type="primary">EMRE</name>
    <name evidence="9" type="ORF">TcasGA2_TC012057</name>
</gene>
<accession>D6X268</accession>
<comment type="function">
    <text evidence="1 2 3">Essential regulatory subunit of the mitochondrial calcium uniporter complex (uniplex), a complex that mediates calcium uptake into mitochondria (PubMed:32667285, PubMed:32841658). Required to bridge the calcium-sensing proteins MICU1 with the calcium-conducting subunit MCU (PubMed:32667285). Acts by mediating activation of MCU and retention of MICU1 to the MCU pore, in order to ensure tight regulation of the uniplex complex and appropriate responses to intracellular calcium signaling (By similarity).</text>
</comment>
<comment type="subunit">
    <text evidence="2 3">Component of the uniplex complex, composed of MCU, EMRE, MICU1 and MICU2 in a 4:4:1:1 stoichiometry.</text>
</comment>
<comment type="subcellular location">
    <subcellularLocation>
        <location evidence="1">Mitochondrion inner membrane</location>
        <topology evidence="2 3">Single-pass membrane protein</topology>
    </subcellularLocation>
</comment>
<comment type="similarity">
    <text evidence="6">Belongs to the SMDT1/EMRE family.</text>
</comment>
<sequence>MVLSRLNPIVKQCVLGNRPNLVSLGPVRTAVYSKSGGLLPEPHRTSFGIIRLILTVVPGLLIGAAISKNIANFLEENDLFVPSDDDDDDD</sequence>
<organism>
    <name type="scientific">Tribolium castaneum</name>
    <name type="common">Red flour beetle</name>
    <dbReference type="NCBI Taxonomy" id="7070"/>
    <lineage>
        <taxon>Eukaryota</taxon>
        <taxon>Metazoa</taxon>
        <taxon>Ecdysozoa</taxon>
        <taxon>Arthropoda</taxon>
        <taxon>Hexapoda</taxon>
        <taxon>Insecta</taxon>
        <taxon>Pterygota</taxon>
        <taxon>Neoptera</taxon>
        <taxon>Endopterygota</taxon>
        <taxon>Coleoptera</taxon>
        <taxon>Polyphaga</taxon>
        <taxon>Cucujiformia</taxon>
        <taxon>Tenebrionidae</taxon>
        <taxon>Tenebrionidae incertae sedis</taxon>
        <taxon>Tribolium</taxon>
    </lineage>
</organism>
<proteinExistence type="evidence at protein level"/>
<feature type="chain" id="PRO_0000460499" description="Essential MCU regulator, mitochondrial">
    <location>
        <begin position="1"/>
        <end position="90"/>
    </location>
</feature>
<feature type="topological domain" description="Mitochondrial matrix" evidence="7 8">
    <location>
        <begin position="1"/>
        <end position="48"/>
    </location>
</feature>
<feature type="transmembrane region" description="Helical" evidence="2 3 10 11">
    <location>
        <begin position="49"/>
        <end position="76"/>
    </location>
</feature>
<feature type="topological domain" description="Mitochondrial intermembrane" evidence="7 8">
    <location>
        <begin position="77"/>
        <end position="90"/>
    </location>
</feature>
<feature type="helix" evidence="12">
    <location>
        <begin position="48"/>
        <end position="76"/>
    </location>
</feature>